<proteinExistence type="inferred from homology"/>
<evidence type="ECO:0000255" key="1">
    <source>
        <dbReference type="HAMAP-Rule" id="MF_00198"/>
    </source>
</evidence>
<gene>
    <name evidence="1" type="primary">speE</name>
    <name type="ordered locus">Mlg_0073</name>
</gene>
<protein>
    <recommendedName>
        <fullName evidence="1">Polyamine aminopropyltransferase</fullName>
    </recommendedName>
    <alternativeName>
        <fullName evidence="1">Putrescine aminopropyltransferase</fullName>
        <shortName evidence="1">PAPT</shortName>
    </alternativeName>
    <alternativeName>
        <fullName evidence="1">Spermidine synthase</fullName>
        <shortName evidence="1">SPDS</shortName>
        <shortName evidence="1">SPDSY</shortName>
        <ecNumber evidence="1">2.5.1.16</ecNumber>
    </alternativeName>
</protein>
<accession>Q0ACK7</accession>
<keyword id="KW-0963">Cytoplasm</keyword>
<keyword id="KW-0620">Polyamine biosynthesis</keyword>
<keyword id="KW-1185">Reference proteome</keyword>
<keyword id="KW-0745">Spermidine biosynthesis</keyword>
<keyword id="KW-0808">Transferase</keyword>
<organism>
    <name type="scientific">Alkalilimnicola ehrlichii (strain ATCC BAA-1101 / DSM 17681 / MLHE-1)</name>
    <dbReference type="NCBI Taxonomy" id="187272"/>
    <lineage>
        <taxon>Bacteria</taxon>
        <taxon>Pseudomonadati</taxon>
        <taxon>Pseudomonadota</taxon>
        <taxon>Gammaproteobacteria</taxon>
        <taxon>Chromatiales</taxon>
        <taxon>Ectothiorhodospiraceae</taxon>
        <taxon>Alkalilimnicola</taxon>
    </lineage>
</organism>
<comment type="function">
    <text evidence="1">Catalyzes the irreversible transfer of a propylamine group from the amino donor S-adenosylmethioninamine (decarboxy-AdoMet) to putrescine (1,4-diaminobutane) to yield spermidine.</text>
</comment>
<comment type="catalytic activity">
    <reaction evidence="1">
        <text>S-adenosyl 3-(methylsulfanyl)propylamine + putrescine = S-methyl-5'-thioadenosine + spermidine + H(+)</text>
        <dbReference type="Rhea" id="RHEA:12721"/>
        <dbReference type="ChEBI" id="CHEBI:15378"/>
        <dbReference type="ChEBI" id="CHEBI:17509"/>
        <dbReference type="ChEBI" id="CHEBI:57443"/>
        <dbReference type="ChEBI" id="CHEBI:57834"/>
        <dbReference type="ChEBI" id="CHEBI:326268"/>
        <dbReference type="EC" id="2.5.1.16"/>
    </reaction>
</comment>
<comment type="pathway">
    <text evidence="1">Amine and polyamine biosynthesis; spermidine biosynthesis; spermidine from putrescine: step 1/1.</text>
</comment>
<comment type="subunit">
    <text evidence="1">Homodimer or homotetramer.</text>
</comment>
<comment type="subcellular location">
    <subcellularLocation>
        <location evidence="1">Cytoplasm</location>
    </subcellularLocation>
</comment>
<comment type="similarity">
    <text evidence="1">Belongs to the spermidine/spermine synthase family.</text>
</comment>
<sequence length="286" mass="31777">MRRDDNWFTEVLEEEGMAFSLRVREKLHEERTAFQHIEVYETEAWGRLLVIDGCVMLTSRDNFVYHEMMSHPALFTHPDPRRVAIIGGGDCGMLREVLKHPGIESVVQVDIDAGVTRAAERYFPELTEANDDPRATLLFDDGVAWIQDQPAGSLDVVIVDSTDPVGVAEGLFGPGFLGQVYRVLGDQGLMVQQSESPILHRDTILERLHGHMRGSGFAPVVTLPYPVVSYPSGWWSATLASKGPHPAAFRESDARAKAFATLYYNADIHRAALAAPEFCKGLLTDQ</sequence>
<name>SPEE_ALKEH</name>
<dbReference type="EC" id="2.5.1.16" evidence="1"/>
<dbReference type="EMBL" id="CP000453">
    <property type="protein sequence ID" value="ABI55430.1"/>
    <property type="molecule type" value="Genomic_DNA"/>
</dbReference>
<dbReference type="RefSeq" id="WP_011627826.1">
    <property type="nucleotide sequence ID" value="NC_008340.1"/>
</dbReference>
<dbReference type="SMR" id="Q0ACK7"/>
<dbReference type="KEGG" id="aeh:Mlg_0073"/>
<dbReference type="eggNOG" id="COG0421">
    <property type="taxonomic scope" value="Bacteria"/>
</dbReference>
<dbReference type="HOGENOM" id="CLU_048199_0_0_6"/>
<dbReference type="OrthoDB" id="9793120at2"/>
<dbReference type="UniPathway" id="UPA00248">
    <property type="reaction ID" value="UER00314"/>
</dbReference>
<dbReference type="Proteomes" id="UP000001962">
    <property type="component" value="Chromosome"/>
</dbReference>
<dbReference type="GO" id="GO:0005829">
    <property type="term" value="C:cytosol"/>
    <property type="evidence" value="ECO:0007669"/>
    <property type="project" value="TreeGrafter"/>
</dbReference>
<dbReference type="GO" id="GO:0004766">
    <property type="term" value="F:spermidine synthase activity"/>
    <property type="evidence" value="ECO:0007669"/>
    <property type="project" value="UniProtKB-UniRule"/>
</dbReference>
<dbReference type="GO" id="GO:0008295">
    <property type="term" value="P:spermidine biosynthetic process"/>
    <property type="evidence" value="ECO:0007669"/>
    <property type="project" value="UniProtKB-UniRule"/>
</dbReference>
<dbReference type="CDD" id="cd02440">
    <property type="entry name" value="AdoMet_MTases"/>
    <property type="match status" value="1"/>
</dbReference>
<dbReference type="Gene3D" id="2.30.140.10">
    <property type="entry name" value="Spermidine synthase, tetramerisation domain"/>
    <property type="match status" value="1"/>
</dbReference>
<dbReference type="Gene3D" id="3.40.50.150">
    <property type="entry name" value="Vaccinia Virus protein VP39"/>
    <property type="match status" value="1"/>
</dbReference>
<dbReference type="HAMAP" id="MF_00198">
    <property type="entry name" value="Spermidine_synth"/>
    <property type="match status" value="1"/>
</dbReference>
<dbReference type="InterPro" id="IPR030374">
    <property type="entry name" value="PABS"/>
</dbReference>
<dbReference type="InterPro" id="IPR030373">
    <property type="entry name" value="PABS_CS"/>
</dbReference>
<dbReference type="InterPro" id="IPR029063">
    <property type="entry name" value="SAM-dependent_MTases_sf"/>
</dbReference>
<dbReference type="InterPro" id="IPR001045">
    <property type="entry name" value="Spermi_synthase"/>
</dbReference>
<dbReference type="InterPro" id="IPR035246">
    <property type="entry name" value="Spermidine_synt_N"/>
</dbReference>
<dbReference type="InterPro" id="IPR037163">
    <property type="entry name" value="Spermidine_synt_N_sf"/>
</dbReference>
<dbReference type="NCBIfam" id="NF002010">
    <property type="entry name" value="PRK00811.1"/>
    <property type="match status" value="1"/>
</dbReference>
<dbReference type="NCBIfam" id="TIGR00417">
    <property type="entry name" value="speE"/>
    <property type="match status" value="1"/>
</dbReference>
<dbReference type="PANTHER" id="PTHR11558:SF11">
    <property type="entry name" value="SPERMIDINE SYNTHASE"/>
    <property type="match status" value="1"/>
</dbReference>
<dbReference type="PANTHER" id="PTHR11558">
    <property type="entry name" value="SPERMIDINE/SPERMINE SYNTHASE"/>
    <property type="match status" value="1"/>
</dbReference>
<dbReference type="Pfam" id="PF17284">
    <property type="entry name" value="Spermine_synt_N"/>
    <property type="match status" value="1"/>
</dbReference>
<dbReference type="Pfam" id="PF01564">
    <property type="entry name" value="Spermine_synth"/>
    <property type="match status" value="1"/>
</dbReference>
<dbReference type="SUPFAM" id="SSF53335">
    <property type="entry name" value="S-adenosyl-L-methionine-dependent methyltransferases"/>
    <property type="match status" value="1"/>
</dbReference>
<dbReference type="PROSITE" id="PS01330">
    <property type="entry name" value="PABS_1"/>
    <property type="match status" value="1"/>
</dbReference>
<dbReference type="PROSITE" id="PS51006">
    <property type="entry name" value="PABS_2"/>
    <property type="match status" value="1"/>
</dbReference>
<feature type="chain" id="PRO_1000099277" description="Polyamine aminopropyltransferase">
    <location>
        <begin position="1"/>
        <end position="286"/>
    </location>
</feature>
<feature type="domain" description="PABS" evidence="1">
    <location>
        <begin position="5"/>
        <end position="242"/>
    </location>
</feature>
<feature type="active site" description="Proton acceptor" evidence="1">
    <location>
        <position position="160"/>
    </location>
</feature>
<feature type="binding site" evidence="1">
    <location>
        <position position="35"/>
    </location>
    <ligand>
        <name>S-methyl-5'-thioadenosine</name>
        <dbReference type="ChEBI" id="CHEBI:17509"/>
    </ligand>
</feature>
<feature type="binding site" evidence="1">
    <location>
        <position position="66"/>
    </location>
    <ligand>
        <name>spermidine</name>
        <dbReference type="ChEBI" id="CHEBI:57834"/>
    </ligand>
</feature>
<feature type="binding site" evidence="1">
    <location>
        <position position="90"/>
    </location>
    <ligand>
        <name>spermidine</name>
        <dbReference type="ChEBI" id="CHEBI:57834"/>
    </ligand>
</feature>
<feature type="binding site" evidence="1">
    <location>
        <position position="110"/>
    </location>
    <ligand>
        <name>S-methyl-5'-thioadenosine</name>
        <dbReference type="ChEBI" id="CHEBI:17509"/>
    </ligand>
</feature>
<feature type="binding site" evidence="1">
    <location>
        <begin position="141"/>
        <end position="142"/>
    </location>
    <ligand>
        <name>S-methyl-5'-thioadenosine</name>
        <dbReference type="ChEBI" id="CHEBI:17509"/>
    </ligand>
</feature>
<feature type="binding site" evidence="1">
    <location>
        <begin position="160"/>
        <end position="163"/>
    </location>
    <ligand>
        <name>spermidine</name>
        <dbReference type="ChEBI" id="CHEBI:57834"/>
    </ligand>
</feature>
<reference key="1">
    <citation type="submission" date="2006-08" db="EMBL/GenBank/DDBJ databases">
        <title>Complete sequence of Alkalilimnicola ehrilichei MLHE-1.</title>
        <authorList>
            <person name="Copeland A."/>
            <person name="Lucas S."/>
            <person name="Lapidus A."/>
            <person name="Barry K."/>
            <person name="Detter J.C."/>
            <person name="Glavina del Rio T."/>
            <person name="Hammon N."/>
            <person name="Israni S."/>
            <person name="Dalin E."/>
            <person name="Tice H."/>
            <person name="Pitluck S."/>
            <person name="Sims D."/>
            <person name="Brettin T."/>
            <person name="Bruce D."/>
            <person name="Han C."/>
            <person name="Tapia R."/>
            <person name="Gilna P."/>
            <person name="Schmutz J."/>
            <person name="Larimer F."/>
            <person name="Land M."/>
            <person name="Hauser L."/>
            <person name="Kyrpides N."/>
            <person name="Mikhailova N."/>
            <person name="Oremland R.S."/>
            <person name="Hoeft S.E."/>
            <person name="Switzer-Blum J."/>
            <person name="Kulp T."/>
            <person name="King G."/>
            <person name="Tabita R."/>
            <person name="Witte B."/>
            <person name="Santini J.M."/>
            <person name="Basu P."/>
            <person name="Hollibaugh J.T."/>
            <person name="Xie G."/>
            <person name="Stolz J.F."/>
            <person name="Richardson P."/>
        </authorList>
    </citation>
    <scope>NUCLEOTIDE SEQUENCE [LARGE SCALE GENOMIC DNA]</scope>
    <source>
        <strain>ATCC BAA-1101 / DSM 17681 / MLHE-1</strain>
    </source>
</reference>